<evidence type="ECO:0000255" key="1">
    <source>
        <dbReference type="HAMAP-Rule" id="MF_00108"/>
    </source>
</evidence>
<comment type="function">
    <text evidence="1">Catalyzes the formation of 4-diphosphocytidyl-2-C-methyl-D-erythritol from CTP and 2-C-methyl-D-erythritol 4-phosphate (MEP).</text>
</comment>
<comment type="catalytic activity">
    <reaction evidence="1">
        <text>2-C-methyl-D-erythritol 4-phosphate + CTP + H(+) = 4-CDP-2-C-methyl-D-erythritol + diphosphate</text>
        <dbReference type="Rhea" id="RHEA:13429"/>
        <dbReference type="ChEBI" id="CHEBI:15378"/>
        <dbReference type="ChEBI" id="CHEBI:33019"/>
        <dbReference type="ChEBI" id="CHEBI:37563"/>
        <dbReference type="ChEBI" id="CHEBI:57823"/>
        <dbReference type="ChEBI" id="CHEBI:58262"/>
        <dbReference type="EC" id="2.7.7.60"/>
    </reaction>
</comment>
<comment type="pathway">
    <text evidence="1">Isoprenoid biosynthesis; isopentenyl diphosphate biosynthesis via DXP pathway; isopentenyl diphosphate from 1-deoxy-D-xylulose 5-phosphate: step 2/6.</text>
</comment>
<comment type="similarity">
    <text evidence="1">Belongs to the IspD/TarI cytidylyltransferase family. IspD subfamily.</text>
</comment>
<keyword id="KW-0414">Isoprene biosynthesis</keyword>
<keyword id="KW-0548">Nucleotidyltransferase</keyword>
<keyword id="KW-1185">Reference proteome</keyword>
<keyword id="KW-0808">Transferase</keyword>
<organism>
    <name type="scientific">Tolumonas auensis (strain DSM 9187 / NBRC 110442 / TA 4)</name>
    <dbReference type="NCBI Taxonomy" id="595494"/>
    <lineage>
        <taxon>Bacteria</taxon>
        <taxon>Pseudomonadati</taxon>
        <taxon>Pseudomonadota</taxon>
        <taxon>Gammaproteobacteria</taxon>
        <taxon>Aeromonadales</taxon>
        <taxon>Aeromonadaceae</taxon>
        <taxon>Tolumonas</taxon>
    </lineage>
</organism>
<protein>
    <recommendedName>
        <fullName evidence="1">2-C-methyl-D-erythritol 4-phosphate cytidylyltransferase</fullName>
        <ecNumber evidence="1">2.7.7.60</ecNumber>
    </recommendedName>
    <alternativeName>
        <fullName evidence="1">4-diphosphocytidyl-2C-methyl-D-erythritol synthase</fullName>
    </alternativeName>
    <alternativeName>
        <fullName evidence="1">MEP cytidylyltransferase</fullName>
        <shortName evidence="1">MCT</shortName>
    </alternativeName>
</protein>
<accession>C4LBQ9</accession>
<feature type="chain" id="PRO_1000202898" description="2-C-methyl-D-erythritol 4-phosphate cytidylyltransferase">
    <location>
        <begin position="1"/>
        <end position="227"/>
    </location>
</feature>
<feature type="site" description="Transition state stabilizer" evidence="1">
    <location>
        <position position="16"/>
    </location>
</feature>
<feature type="site" description="Transition state stabilizer" evidence="1">
    <location>
        <position position="23"/>
    </location>
</feature>
<feature type="site" description="Positions MEP for the nucleophilic attack" evidence="1">
    <location>
        <position position="151"/>
    </location>
</feature>
<feature type="site" description="Positions MEP for the nucleophilic attack" evidence="1">
    <location>
        <position position="207"/>
    </location>
</feature>
<proteinExistence type="inferred from homology"/>
<name>ISPD_TOLAT</name>
<gene>
    <name evidence="1" type="primary">ispD</name>
    <name type="ordered locus">Tola_2740</name>
</gene>
<reference key="1">
    <citation type="submission" date="2009-05" db="EMBL/GenBank/DDBJ databases">
        <title>Complete sequence of Tolumonas auensis DSM 9187.</title>
        <authorList>
            <consortium name="US DOE Joint Genome Institute"/>
            <person name="Lucas S."/>
            <person name="Copeland A."/>
            <person name="Lapidus A."/>
            <person name="Glavina del Rio T."/>
            <person name="Tice H."/>
            <person name="Bruce D."/>
            <person name="Goodwin L."/>
            <person name="Pitluck S."/>
            <person name="Chertkov O."/>
            <person name="Brettin T."/>
            <person name="Detter J.C."/>
            <person name="Han C."/>
            <person name="Larimer F."/>
            <person name="Land M."/>
            <person name="Hauser L."/>
            <person name="Kyrpides N."/>
            <person name="Mikhailova N."/>
            <person name="Spring S."/>
            <person name="Beller H."/>
        </authorList>
    </citation>
    <scope>NUCLEOTIDE SEQUENCE [LARGE SCALE GENOMIC DNA]</scope>
    <source>
        <strain>DSM 9187 / NBRC 110442 / TA 4</strain>
    </source>
</reference>
<dbReference type="EC" id="2.7.7.60" evidence="1"/>
<dbReference type="EMBL" id="CP001616">
    <property type="protein sequence ID" value="ACQ94333.1"/>
    <property type="molecule type" value="Genomic_DNA"/>
</dbReference>
<dbReference type="RefSeq" id="WP_015879782.1">
    <property type="nucleotide sequence ID" value="NC_012691.1"/>
</dbReference>
<dbReference type="SMR" id="C4LBQ9"/>
<dbReference type="STRING" id="595494.Tola_2740"/>
<dbReference type="KEGG" id="tau:Tola_2740"/>
<dbReference type="eggNOG" id="COG1211">
    <property type="taxonomic scope" value="Bacteria"/>
</dbReference>
<dbReference type="HOGENOM" id="CLU_061281_3_1_6"/>
<dbReference type="OrthoDB" id="9806837at2"/>
<dbReference type="UniPathway" id="UPA00056">
    <property type="reaction ID" value="UER00093"/>
</dbReference>
<dbReference type="Proteomes" id="UP000009073">
    <property type="component" value="Chromosome"/>
</dbReference>
<dbReference type="GO" id="GO:0050518">
    <property type="term" value="F:2-C-methyl-D-erythritol 4-phosphate cytidylyltransferase activity"/>
    <property type="evidence" value="ECO:0007669"/>
    <property type="project" value="UniProtKB-UniRule"/>
</dbReference>
<dbReference type="GO" id="GO:0019288">
    <property type="term" value="P:isopentenyl diphosphate biosynthetic process, methylerythritol 4-phosphate pathway"/>
    <property type="evidence" value="ECO:0007669"/>
    <property type="project" value="UniProtKB-UniRule"/>
</dbReference>
<dbReference type="CDD" id="cd02516">
    <property type="entry name" value="CDP-ME_synthetase"/>
    <property type="match status" value="1"/>
</dbReference>
<dbReference type="FunFam" id="3.90.550.10:FF:000003">
    <property type="entry name" value="2-C-methyl-D-erythritol 4-phosphate cytidylyltransferase"/>
    <property type="match status" value="1"/>
</dbReference>
<dbReference type="Gene3D" id="3.90.550.10">
    <property type="entry name" value="Spore Coat Polysaccharide Biosynthesis Protein SpsA, Chain A"/>
    <property type="match status" value="1"/>
</dbReference>
<dbReference type="HAMAP" id="MF_00108">
    <property type="entry name" value="IspD"/>
    <property type="match status" value="1"/>
</dbReference>
<dbReference type="InterPro" id="IPR001228">
    <property type="entry name" value="IspD"/>
</dbReference>
<dbReference type="InterPro" id="IPR034683">
    <property type="entry name" value="IspD/TarI"/>
</dbReference>
<dbReference type="InterPro" id="IPR050088">
    <property type="entry name" value="IspD/TarI_cytidylyltransf_bact"/>
</dbReference>
<dbReference type="InterPro" id="IPR018294">
    <property type="entry name" value="ISPD_synthase_CS"/>
</dbReference>
<dbReference type="InterPro" id="IPR029044">
    <property type="entry name" value="Nucleotide-diphossugar_trans"/>
</dbReference>
<dbReference type="NCBIfam" id="TIGR00453">
    <property type="entry name" value="ispD"/>
    <property type="match status" value="1"/>
</dbReference>
<dbReference type="PANTHER" id="PTHR32125">
    <property type="entry name" value="2-C-METHYL-D-ERYTHRITOL 4-PHOSPHATE CYTIDYLYLTRANSFERASE, CHLOROPLASTIC"/>
    <property type="match status" value="1"/>
</dbReference>
<dbReference type="PANTHER" id="PTHR32125:SF4">
    <property type="entry name" value="2-C-METHYL-D-ERYTHRITOL 4-PHOSPHATE CYTIDYLYLTRANSFERASE, CHLOROPLASTIC"/>
    <property type="match status" value="1"/>
</dbReference>
<dbReference type="Pfam" id="PF01128">
    <property type="entry name" value="IspD"/>
    <property type="match status" value="1"/>
</dbReference>
<dbReference type="SUPFAM" id="SSF53448">
    <property type="entry name" value="Nucleotide-diphospho-sugar transferases"/>
    <property type="match status" value="1"/>
</dbReference>
<dbReference type="PROSITE" id="PS01295">
    <property type="entry name" value="ISPD"/>
    <property type="match status" value="1"/>
</dbReference>
<sequence length="227" mass="24811">MQTFTAVVPAAGRGSRMQANKPKQYLHLGDKTIIEHTLTRLLAHPQIEKIVVVIADDDHYFSSLPLANHPRIEVTLGGPERAISVLNGLSSVETDWVLVHDAARPCITQSDLDALMAAAELGEDGAILAVPVKDTMKRSDSQQRIEETVERGHLWHALTPQMFPTQQLADAIDAGLTQSIVLTDEASAMERAGFKPLLVAGRSDNIKVTRPEDLALAAFILQQQELE</sequence>